<dbReference type="EMBL" id="AF464191">
    <property type="status" value="NOT_ANNOTATED_CDS"/>
    <property type="molecule type" value="mRNA"/>
</dbReference>
<dbReference type="EMBL" id="AF464192">
    <property type="status" value="NOT_ANNOTATED_CDS"/>
    <property type="molecule type" value="mRNA"/>
</dbReference>
<dbReference type="EMBL" id="AF464193">
    <property type="status" value="NOT_ANNOTATED_CDS"/>
    <property type="molecule type" value="mRNA"/>
</dbReference>
<dbReference type="EMBL" id="AF464194">
    <property type="status" value="NOT_ANNOTATED_CDS"/>
    <property type="molecule type" value="mRNA"/>
</dbReference>
<dbReference type="EMBL" id="AF464195">
    <property type="status" value="NOT_ANNOTATED_CDS"/>
    <property type="molecule type" value="mRNA"/>
</dbReference>
<dbReference type="EMBL" id="AF486844">
    <property type="status" value="NOT_ANNOTATED_CDS"/>
    <property type="molecule type" value="mRNA"/>
</dbReference>
<dbReference type="EMBL" id="AF486845">
    <property type="status" value="NOT_ANNOTATED_CDS"/>
    <property type="molecule type" value="mRNA"/>
</dbReference>
<dbReference type="EMBL" id="AF486846">
    <property type="status" value="NOT_ANNOTATED_CDS"/>
    <property type="molecule type" value="mRNA"/>
</dbReference>
<dbReference type="EMBL" id="AF486847">
    <property type="status" value="NOT_ANNOTATED_CDS"/>
    <property type="molecule type" value="mRNA"/>
</dbReference>
<dbReference type="EMBL" id="AY358222">
    <property type="protein sequence ID" value="AAQ88589.1"/>
    <property type="molecule type" value="mRNA"/>
</dbReference>
<dbReference type="EMBL" id="AP002004">
    <property type="status" value="NOT_ANNOTATED_CDS"/>
    <property type="molecule type" value="Genomic_DNA"/>
</dbReference>
<dbReference type="RefSeq" id="NP_001177945.2">
    <molecule id="Q6UXS9-1"/>
    <property type="nucleotide sequence ID" value="NM_001191016.3"/>
</dbReference>
<dbReference type="SMR" id="Q6UXS9"/>
<dbReference type="BioGRID" id="125680">
    <property type="interactions" value="17"/>
</dbReference>
<dbReference type="FunCoup" id="Q6UXS9">
    <property type="interactions" value="472"/>
</dbReference>
<dbReference type="IntAct" id="Q6UXS9">
    <property type="interactions" value="7"/>
</dbReference>
<dbReference type="MINT" id="Q6UXS9"/>
<dbReference type="BindingDB" id="Q6UXS9"/>
<dbReference type="ChEMBL" id="CHEMBL3831289"/>
<dbReference type="MEROPS" id="C14.P01"/>
<dbReference type="iPTMnet" id="Q6UXS9"/>
<dbReference type="PhosphoSitePlus" id="Q6UXS9"/>
<dbReference type="BioMuta" id="CASP12"/>
<dbReference type="DMDM" id="395398427"/>
<dbReference type="jPOST" id="Q6UXS9"/>
<dbReference type="PeptideAtlas" id="Q6UXS9"/>
<dbReference type="ProteomicsDB" id="67653">
    <molecule id="Q6UXS9-1"/>
</dbReference>
<dbReference type="ProteomicsDB" id="67654">
    <molecule id="Q6UXS9-2"/>
</dbReference>
<dbReference type="ProteomicsDB" id="67655">
    <molecule id="Q6UXS9-3"/>
</dbReference>
<dbReference type="DNASU" id="100506742"/>
<dbReference type="Ensembl" id="ENST00000417998.5">
    <molecule id="Q6UXS9-2"/>
    <property type="protein sequence ID" value="ENSP00000424963.1"/>
    <property type="gene ID" value="ENSG00000204403.11"/>
</dbReference>
<dbReference type="Ensembl" id="ENST00000458137.5">
    <molecule id="Q6UXS9-2"/>
    <property type="protein sequence ID" value="ENSP00000421408.1"/>
    <property type="gene ID" value="ENSG00000204403.11"/>
</dbReference>
<dbReference type="Ensembl" id="ENST00000709446.2">
    <molecule id="Q6UXS9-1"/>
    <property type="protein sequence ID" value="ENSP00000517698.1"/>
    <property type="gene ID" value="ENSG00000291983.2"/>
</dbReference>
<dbReference type="Ensembl" id="ENST00000709447.1">
    <molecule id="Q6UXS9-6"/>
    <property type="protein sequence ID" value="ENSP00000517699.1"/>
    <property type="gene ID" value="ENSG00000291983.2"/>
</dbReference>
<dbReference type="Ensembl" id="ENST00000709448.1">
    <molecule id="Q6UXS9-1"/>
    <property type="protein sequence ID" value="ENSP00000517700.1"/>
    <property type="gene ID" value="ENSG00000291983.2"/>
</dbReference>
<dbReference type="Ensembl" id="ENST00000709449.1">
    <molecule id="Q6UXS9-2"/>
    <property type="protein sequence ID" value="ENSP00000517701.1"/>
    <property type="gene ID" value="ENSG00000291983.2"/>
</dbReference>
<dbReference type="Ensembl" id="ENST00000709450.1">
    <molecule id="Q6UXS9-3"/>
    <property type="protein sequence ID" value="ENSP00000517702.1"/>
    <property type="gene ID" value="ENSG00000291983.2"/>
</dbReference>
<dbReference type="Ensembl" id="ENST00000709451.1">
    <molecule id="Q6UXS9-5"/>
    <property type="protein sequence ID" value="ENSP00000517703.1"/>
    <property type="gene ID" value="ENSG00000291983.2"/>
</dbReference>
<dbReference type="Ensembl" id="ENST00000709452.1">
    <molecule id="Q6UXS9-4"/>
    <property type="protein sequence ID" value="ENSP00000517704.1"/>
    <property type="gene ID" value="ENSG00000291983.2"/>
</dbReference>
<dbReference type="Ensembl" id="ENST00000709453.1">
    <molecule id="Q6UXS9-8"/>
    <property type="protein sequence ID" value="ENSP00000517705.1"/>
    <property type="gene ID" value="ENSG00000291983.2"/>
</dbReference>
<dbReference type="Ensembl" id="ENST00000709454.1">
    <molecule id="Q6UXS9-6"/>
    <property type="protein sequence ID" value="ENSP00000517706.1"/>
    <property type="gene ID" value="ENSG00000291983.2"/>
</dbReference>
<dbReference type="Ensembl" id="ENST00000709455.1">
    <molecule id="Q6UXS9-2"/>
    <property type="protein sequence ID" value="ENSP00000517707.1"/>
    <property type="gene ID" value="ENSG00000291983.2"/>
</dbReference>
<dbReference type="Ensembl" id="ENST00000709456.1">
    <molecule id="Q6UXS9-7"/>
    <property type="protein sequence ID" value="ENSP00000517708.1"/>
    <property type="gene ID" value="ENSG00000291983.2"/>
</dbReference>
<dbReference type="GeneID" id="100506742"/>
<dbReference type="KEGG" id="hsa:100506742"/>
<dbReference type="MANE-Select" id="ENST00000709446.2">
    <property type="protein sequence ID" value="ENSP00000517698.1"/>
    <property type="RefSeq nucleotide sequence ID" value="NM_001191016.3"/>
    <property type="RefSeq protein sequence ID" value="NP_001177945.2"/>
</dbReference>
<dbReference type="UCSC" id="uc031qdp.3">
    <molecule id="Q6UXS9-1"/>
    <property type="organism name" value="human"/>
</dbReference>
<dbReference type="AGR" id="HGNC:19004"/>
<dbReference type="CTD" id="100506742"/>
<dbReference type="DisGeNET" id="100506742"/>
<dbReference type="GeneCards" id="CASP12"/>
<dbReference type="HGNC" id="HGNC:19004">
    <property type="gene designation" value="CASP12"/>
</dbReference>
<dbReference type="MIM" id="608633">
    <property type="type" value="gene"/>
</dbReference>
<dbReference type="neXtProt" id="NX_Q6UXS9"/>
<dbReference type="OpenTargets" id="ENSG00000204403"/>
<dbReference type="VEuPathDB" id="HostDB:ENSG00000204403"/>
<dbReference type="GeneTree" id="ENSGT00940000162555"/>
<dbReference type="HOGENOM" id="CLU_1585906_0_0_1"/>
<dbReference type="InParanoid" id="Q6UXS9"/>
<dbReference type="OrthoDB" id="6097640at2759"/>
<dbReference type="PAN-GO" id="Q6UXS9">
    <property type="GO annotations" value="6 GO annotations based on evolutionary models"/>
</dbReference>
<dbReference type="PhylomeDB" id="Q6UXS9"/>
<dbReference type="TreeFam" id="TF102023"/>
<dbReference type="BioCyc" id="MetaCyc:G66-33181-MONOMER"/>
<dbReference type="BRENDA" id="3.4.22.B66">
    <property type="organism ID" value="2681"/>
</dbReference>
<dbReference type="PathwayCommons" id="Q6UXS9"/>
<dbReference type="SignaLink" id="Q6UXS9"/>
<dbReference type="SIGNOR" id="Q6UXS9"/>
<dbReference type="BioGRID-ORCS" id="100506742">
    <property type="hits" value="10 hits in 683 CRISPR screens"/>
</dbReference>
<dbReference type="ChiTaRS" id="CASP12">
    <property type="organism name" value="human"/>
</dbReference>
<dbReference type="GenomeRNAi" id="100506742"/>
<dbReference type="Pharos" id="Q6UXS9">
    <property type="development level" value="Tbio"/>
</dbReference>
<dbReference type="PRO" id="PR:Q6UXS9"/>
<dbReference type="Proteomes" id="UP000005640">
    <property type="component" value="Chromosome 11"/>
</dbReference>
<dbReference type="RNAct" id="Q6UXS9">
    <property type="molecule type" value="protein"/>
</dbReference>
<dbReference type="Bgee" id="ENSG00000204403">
    <property type="expression patterns" value="Expressed in male germ line stem cell (sensu Vertebrata) in testis and 94 other cell types or tissues"/>
</dbReference>
<dbReference type="ExpressionAtlas" id="Q6UXS9">
    <property type="expression patterns" value="baseline and differential"/>
</dbReference>
<dbReference type="GO" id="GO:0005737">
    <property type="term" value="C:cytoplasm"/>
    <property type="evidence" value="ECO:0000318"/>
    <property type="project" value="GO_Central"/>
</dbReference>
<dbReference type="GO" id="GO:0005829">
    <property type="term" value="C:cytosol"/>
    <property type="evidence" value="ECO:0000318"/>
    <property type="project" value="GO_Central"/>
</dbReference>
<dbReference type="GO" id="GO:0005783">
    <property type="term" value="C:endoplasmic reticulum"/>
    <property type="evidence" value="ECO:0000314"/>
    <property type="project" value="ParkinsonsUK-UCL"/>
</dbReference>
<dbReference type="GO" id="GO:0072558">
    <property type="term" value="C:NLRP1 inflammasome complex"/>
    <property type="evidence" value="ECO:0000318"/>
    <property type="project" value="GO_Central"/>
</dbReference>
<dbReference type="GO" id="GO:0008234">
    <property type="term" value="F:cysteine-type peptidase activity"/>
    <property type="evidence" value="ECO:0007669"/>
    <property type="project" value="InterPro"/>
</dbReference>
<dbReference type="GO" id="GO:0050729">
    <property type="term" value="P:positive regulation of inflammatory response"/>
    <property type="evidence" value="ECO:0000318"/>
    <property type="project" value="GO_Central"/>
</dbReference>
<dbReference type="GO" id="GO:0043525">
    <property type="term" value="P:positive regulation of neuron apoptotic process"/>
    <property type="evidence" value="ECO:0000318"/>
    <property type="project" value="GO_Central"/>
</dbReference>
<dbReference type="GO" id="GO:0006508">
    <property type="term" value="P:proteolysis"/>
    <property type="evidence" value="ECO:0007669"/>
    <property type="project" value="InterPro"/>
</dbReference>
<dbReference type="CDD" id="cd08325">
    <property type="entry name" value="CARD_CASP1-like"/>
    <property type="match status" value="1"/>
</dbReference>
<dbReference type="CDD" id="cd00032">
    <property type="entry name" value="CASc"/>
    <property type="match status" value="1"/>
</dbReference>
<dbReference type="FunFam" id="3.30.70.1470:FF:000003">
    <property type="entry name" value="Caspase-1"/>
    <property type="match status" value="1"/>
</dbReference>
<dbReference type="FunFam" id="3.40.50.1460:FF:000007">
    <property type="entry name" value="Caspase-1"/>
    <property type="match status" value="1"/>
</dbReference>
<dbReference type="FunFam" id="1.10.533.10:FF:000073">
    <property type="entry name" value="Inactive caspase-12"/>
    <property type="match status" value="1"/>
</dbReference>
<dbReference type="Gene3D" id="3.40.50.1460">
    <property type="match status" value="1"/>
</dbReference>
<dbReference type="Gene3D" id="3.30.70.1470">
    <property type="entry name" value="Caspase-like"/>
    <property type="match status" value="1"/>
</dbReference>
<dbReference type="Gene3D" id="1.10.533.10">
    <property type="entry name" value="Death Domain, Fas"/>
    <property type="match status" value="1"/>
</dbReference>
<dbReference type="InterPro" id="IPR001315">
    <property type="entry name" value="CARD"/>
</dbReference>
<dbReference type="InterPro" id="IPR029030">
    <property type="entry name" value="Caspase-like_dom_sf"/>
</dbReference>
<dbReference type="InterPro" id="IPR033139">
    <property type="entry name" value="Caspase_cys_AS"/>
</dbReference>
<dbReference type="InterPro" id="IPR011029">
    <property type="entry name" value="DEATH-like_dom_sf"/>
</dbReference>
<dbReference type="InterPro" id="IPR002398">
    <property type="entry name" value="Pept_C14"/>
</dbReference>
<dbReference type="InterPro" id="IPR011600">
    <property type="entry name" value="Pept_C14_caspase"/>
</dbReference>
<dbReference type="InterPro" id="IPR002138">
    <property type="entry name" value="Pept_C14_p10"/>
</dbReference>
<dbReference type="InterPro" id="IPR001309">
    <property type="entry name" value="Pept_C14_p20"/>
</dbReference>
<dbReference type="InterPro" id="IPR015917">
    <property type="entry name" value="Pept_C14A"/>
</dbReference>
<dbReference type="PANTHER" id="PTHR47901">
    <property type="entry name" value="CASPASE RECRUITMENT DOMAIN-CONTAINING PROTEIN 18"/>
    <property type="match status" value="1"/>
</dbReference>
<dbReference type="PANTHER" id="PTHR47901:SF6">
    <property type="entry name" value="CASPASE-12"/>
    <property type="match status" value="1"/>
</dbReference>
<dbReference type="Pfam" id="PF00619">
    <property type="entry name" value="CARD"/>
    <property type="match status" value="1"/>
</dbReference>
<dbReference type="Pfam" id="PF00656">
    <property type="entry name" value="Peptidase_C14"/>
    <property type="match status" value="1"/>
</dbReference>
<dbReference type="PIRSF" id="PIRSF038001">
    <property type="entry name" value="Caspase_ICE"/>
    <property type="match status" value="1"/>
</dbReference>
<dbReference type="PRINTS" id="PR00376">
    <property type="entry name" value="IL1BCENZYME"/>
</dbReference>
<dbReference type="SMART" id="SM00115">
    <property type="entry name" value="CASc"/>
    <property type="match status" value="1"/>
</dbReference>
<dbReference type="SUPFAM" id="SSF52129">
    <property type="entry name" value="Caspase-like"/>
    <property type="match status" value="1"/>
</dbReference>
<dbReference type="SUPFAM" id="SSF47986">
    <property type="entry name" value="DEATH domain"/>
    <property type="match status" value="1"/>
</dbReference>
<dbReference type="PROSITE" id="PS50209">
    <property type="entry name" value="CARD"/>
    <property type="match status" value="1"/>
</dbReference>
<dbReference type="PROSITE" id="PS01122">
    <property type="entry name" value="CASPASE_CYS"/>
    <property type="match status" value="1"/>
</dbReference>
<dbReference type="PROSITE" id="PS50207">
    <property type="entry name" value="CASPASE_P10"/>
    <property type="match status" value="1"/>
</dbReference>
<dbReference type="PROSITE" id="PS50208">
    <property type="entry name" value="CASPASE_P20"/>
    <property type="match status" value="1"/>
</dbReference>
<accession>Q6UXS9</accession>
<accession>D6RBN7</accession>
<comment type="function">
    <text evidence="5 11">May function as a negative regulator of inflammatory responses and innate immunity. May reduce cytokine release in response to bacterial lipopolysaccharide during infection. Reduces activation of NF-kappa-B in response to TNF (PubMed:15129283). May lack protease activity (Probable).</text>
</comment>
<comment type="alternative products">
    <event type="alternative splicing"/>
    <isoform>
        <id>Q6UXS9-1</id>
        <name>1</name>
        <name evidence="9">Epsilon</name>
        <name evidence="12">Gamma</name>
        <sequence type="displayed"/>
    </isoform>
    <isoform>
        <id>Q6UXS9-2</id>
        <name>2</name>
        <name evidence="9">Alpha</name>
        <name evidence="9">Beta</name>
        <sequence type="described" ref="VSP_030954 VSP_030955"/>
    </isoform>
    <isoform>
        <id>Q6UXS9-3</id>
        <name>3</name>
        <name evidence="9">Iota</name>
        <sequence type="described" ref="VSP_061925 VSP_061927"/>
    </isoform>
    <isoform>
        <id>Q6UXS9-4</id>
        <name>4</name>
        <name evidence="9">Zeta</name>
        <name evidence="13">Epsilon</name>
        <sequence type="described" ref="VSP_061929"/>
    </isoform>
    <isoform>
        <id>Q6UXS9-5</id>
        <name>5</name>
        <name evidence="9">Eta</name>
        <name evidence="14">Delta</name>
        <sequence type="described" ref="VSP_061928"/>
    </isoform>
    <isoform>
        <id>Q6UXS9-6</id>
        <name>6</name>
        <name evidence="9">Gamma</name>
        <name evidence="16">Zeta</name>
        <sequence type="described" ref="VSP_061926"/>
    </isoform>
    <isoform>
        <id>Q6UXS9-7</id>
        <name>7</name>
        <name evidence="9">Theta</name>
        <name evidence="15">Eta</name>
        <sequence type="described" ref="VSP_061927"/>
    </isoform>
    <isoform>
        <id>Q6UXS9-8</id>
        <name>8</name>
        <name evidence="9">Delta</name>
        <name evidence="17">Theta</name>
        <sequence type="described" ref="VSP_061925 VSP_061926"/>
    </isoform>
</comment>
<comment type="tissue specificity">
    <text evidence="4">Widely expressed, with highest levels in lung.</text>
</comment>
<comment type="polymorphism">
    <text evidence="5 6 8">The sequence shown in this entry differs from the translation of the reference genome assembly (GRCh38/hg38) due to a nonsense variant creating stop codon at position 125 in the reference genome, giving rise to a truncated protein (Csp12-S) (PubMed:15129283, PubMed:16917906). The sequence shown in this entry is that of variant p.Ter125Arg. This variant gives rise to a full length protein (Csp12-L). It occurs in the human population at a frequence of about 4% according to the Genome Aggregation Database (gnomAD v3.1.2), with highest frequency observed in people of African descent (up to 60% in certain sub-Saharan populations) (PubMed:15129283, PubMed:16532395, PubMed:16917906). Csp12-L expression may increase the susceptibility to severe sepsis, and may result in higher mortality rates (up to 3-fold) once severe sepsis develop (PubMed:15129283).</text>
</comment>
<comment type="similarity">
    <text evidence="10">Belongs to the peptidase C14A family.</text>
</comment>
<comment type="caution">
    <text evidence="10">The sequence shown in this entry differs from the translation of the reference genome assembly (GRCh38/hg38) due to a nonsense variant creating stop codon at position 125 in the reference genome.</text>
</comment>
<feature type="chain" id="PRO_0000317441" description="Inactive caspase-12">
    <location>
        <begin position="1"/>
        <end position="341"/>
    </location>
</feature>
<feature type="domain" description="CARD" evidence="3">
    <location>
        <begin position="1"/>
        <end position="92"/>
    </location>
</feature>
<feature type="active site" evidence="2">
    <location>
        <position position="172"/>
    </location>
</feature>
<feature type="active site" evidence="2">
    <location>
        <position position="220"/>
    </location>
</feature>
<feature type="modified residue" description="Phosphoserine" evidence="1">
    <location>
        <position position="85"/>
    </location>
</feature>
<feature type="modified residue" description="Phosphoserine" evidence="1">
    <location>
        <position position="90"/>
    </location>
</feature>
<feature type="splice variant" id="VSP_061925" description="In isoform 3 and isoform 8." evidence="9">
    <location>
        <begin position="3"/>
        <end position="86"/>
    </location>
</feature>
<feature type="splice variant" id="VSP_030954" description="In isoform 2." evidence="9">
    <original>DISSDGEREANMPGLNIRNKEFNYLHNRNGSELDLLGMRDLLENLGYSVVIKENLTAQEMETALRQFAAHPEHQSSDSTFLV</original>
    <variation>AFLEIQGAQPSGKLKLCPHAHFHELKTKRADEIYPVMEKERRTCLASTSATKNSTIFIIEMVLNLTFWGCEIYLKTLDTQWL</variation>
    <location>
        <begin position="87"/>
        <end position="168"/>
    </location>
</feature>
<feature type="splice variant" id="VSP_061926" description="In isoform 6 and isoform 8." evidence="9">
    <original>EMETALRQFAAHPEHQSSDSTFLVFMSHSILNGICGTKHWDQEPDVLHDDTIFEIFNNRNCQSLKDKPKVIIMQACRGNGAGIVWFTTDSGKASADTHGRLLQGNICNDAVTKAHVEKDFIAFKSSTPHNVSWRHETNGSVFISQIIYYFREYSWSHHLEEIFQKVQHSFETPNILTQLPTIERLSMTRYFYLFPGN</original>
    <variation>MVLGLFGSPLTVEKPVQILMVGSCKVTSVMMLLQRLMWKRTSLLSNLPHHIMFLGDMKQMALSSFPKLSTTSESILGVII</variation>
    <location>
        <begin position="145"/>
        <end position="341"/>
    </location>
</feature>
<feature type="splice variant" id="VSP_061927" description="In isoform 3 and isoform 7." evidence="9">
    <original>EMETALRQFAAHPEHQSSDSTFLVFMSHSILNGICGTKHWDQEPDVLHDDTIFEIFNNRNCQSLKDKPKVIIMQACRGNGAGIVWFTTDSGKASADTHGRLLQGNICNDAVTKAHVEKDFIAFKSSTPHNVSWRHETNGSVFISQIIYYFREYSWSHHLEEIFQK</original>
    <variation>MVLGLFGSPLTVEKPVQILMVGSCKVTSVMMLLQRLMWKRTSLLSNLPHH</variation>
    <location>
        <begin position="145"/>
        <end position="309"/>
    </location>
</feature>
<feature type="splice variant" id="VSP_030955" description="In isoform 2." evidence="9">
    <location>
        <begin position="169"/>
        <end position="341"/>
    </location>
</feature>
<feature type="splice variant" id="VSP_061928" description="In isoform 5." evidence="9">
    <original>VIIMQACRGNGAGIVWFTTDSGKASADTHGRLLQGNICNDAVTKAHVEKDFIAFKSSTPHNVSWRHETNGSVFISQIIYYFREYSWSHHLEEIFQK</original>
    <variation>MVLGLFGSPLTVEKPVQILMVGSCKVTSVMMLLQRLMWKRTSLLSNLPHH</variation>
    <location>
        <begin position="214"/>
        <end position="309"/>
    </location>
</feature>
<feature type="splice variant" id="VSP_061929" description="In isoform 4." evidence="9">
    <original>HNVSWRHETNGSVFISQIIYYFREYSWSHHLEEIFQKVQHSFETPNILTQLPTIERLSMTRYFYLFPGN</original>
    <variation>RSTFI</variation>
    <location>
        <begin position="273"/>
        <end position="341"/>
    </location>
</feature>
<feature type="sequence variant" id="VAR_080638" description="In dbSNP:rs693001.">
    <original>I</original>
    <variation>T</variation>
    <location>
        <position position="68"/>
    </location>
</feature>
<feature type="sequence variant" id="VAR_080639" description="In dbSNP:rs497116." evidence="4 5 6 7 8">
    <location>
        <begin position="125"/>
        <end position="341"/>
    </location>
</feature>
<feature type="sequence variant" id="VAR_080640" description="In dbSNP:rs647039.">
    <original>S</original>
    <variation>G</variation>
    <location>
        <position position="238"/>
    </location>
</feature>
<feature type="sequence conflict" description="In Ref. 1; AF486844/AF486845." evidence="10" ref="1">
    <original>F</original>
    <variation>L</variation>
    <location sequence="Q6UXS9-2">
        <position position="88"/>
    </location>
</feature>
<evidence type="ECO:0000250" key="1">
    <source>
        <dbReference type="UniProtKB" id="Q920D5"/>
    </source>
</evidence>
<evidence type="ECO:0000255" key="2"/>
<evidence type="ECO:0000255" key="3">
    <source>
        <dbReference type="PROSITE-ProRule" id="PRU00046"/>
    </source>
</evidence>
<evidence type="ECO:0000269" key="4">
    <source>
    </source>
</evidence>
<evidence type="ECO:0000269" key="5">
    <source>
    </source>
</evidence>
<evidence type="ECO:0000269" key="6">
    <source>
    </source>
</evidence>
<evidence type="ECO:0000269" key="7">
    <source>
    </source>
</evidence>
<evidence type="ECO:0000269" key="8">
    <source>
    </source>
</evidence>
<evidence type="ECO:0000303" key="9">
    <source>
    </source>
</evidence>
<evidence type="ECO:0000305" key="10"/>
<evidence type="ECO:0000305" key="11">
    <source>
    </source>
</evidence>
<evidence type="ECO:0000312" key="12">
    <source>
        <dbReference type="EMBL" id="AF464191"/>
    </source>
</evidence>
<evidence type="ECO:0000312" key="13">
    <source>
        <dbReference type="EMBL" id="AF464192"/>
    </source>
</evidence>
<evidence type="ECO:0000312" key="14">
    <source>
        <dbReference type="EMBL" id="AF464193"/>
    </source>
</evidence>
<evidence type="ECO:0000312" key="15">
    <source>
        <dbReference type="EMBL" id="AF464194"/>
    </source>
</evidence>
<evidence type="ECO:0000312" key="16">
    <source>
        <dbReference type="EMBL" id="AF486846"/>
    </source>
</evidence>
<evidence type="ECO:0000312" key="17">
    <source>
        <dbReference type="EMBL" id="AF486847"/>
    </source>
</evidence>
<proteinExistence type="evidence at transcript level"/>
<gene>
    <name type="primary">CASP12</name>
    <name type="ORF">UNQ9415/PRO34398</name>
</gene>
<name>CASPC_HUMAN</name>
<organism>
    <name type="scientific">Homo sapiens</name>
    <name type="common">Human</name>
    <dbReference type="NCBI Taxonomy" id="9606"/>
    <lineage>
        <taxon>Eukaryota</taxon>
        <taxon>Metazoa</taxon>
        <taxon>Chordata</taxon>
        <taxon>Craniata</taxon>
        <taxon>Vertebrata</taxon>
        <taxon>Euteleostomi</taxon>
        <taxon>Mammalia</taxon>
        <taxon>Eutheria</taxon>
        <taxon>Euarchontoglires</taxon>
        <taxon>Primates</taxon>
        <taxon>Haplorrhini</taxon>
        <taxon>Catarrhini</taxon>
        <taxon>Hominidae</taxon>
        <taxon>Homo</taxon>
    </lineage>
</organism>
<reference key="1">
    <citation type="journal article" date="2002" name="Biochem. Biophys. Res. Commun.">
        <title>Human caspase 12 has acquired deleterious mutations.</title>
        <authorList>
            <person name="Fischer H."/>
            <person name="Koenig U."/>
            <person name="Eckhart L."/>
            <person name="Tschachler E."/>
        </authorList>
    </citation>
    <scope>NUCLEOTIDE SEQUENCE [MRNA] (ISOFORMS 1; 2; 3; 4; 5; 6; 7 AND 8)</scope>
    <scope>FUNCTION</scope>
    <scope>TISSUE SPECIFICITY</scope>
    <scope>VARIANT 125-ARG--ASN-341 DEL</scope>
    <source>
        <tissue>Lung</tissue>
    </source>
</reference>
<reference key="2">
    <citation type="journal article" date="2003" name="Genome Res.">
        <title>The secreted protein discovery initiative (SPDI), a large-scale effort to identify novel human secreted and transmembrane proteins: a bioinformatics assessment.</title>
        <authorList>
            <person name="Clark H.F."/>
            <person name="Gurney A.L."/>
            <person name="Abaya E."/>
            <person name="Baker K."/>
            <person name="Baldwin D.T."/>
            <person name="Brush J."/>
            <person name="Chen J."/>
            <person name="Chow B."/>
            <person name="Chui C."/>
            <person name="Crowley C."/>
            <person name="Currell B."/>
            <person name="Deuel B."/>
            <person name="Dowd P."/>
            <person name="Eaton D."/>
            <person name="Foster J.S."/>
            <person name="Grimaldi C."/>
            <person name="Gu Q."/>
            <person name="Hass P.E."/>
            <person name="Heldens S."/>
            <person name="Huang A."/>
            <person name="Kim H.S."/>
            <person name="Klimowski L."/>
            <person name="Jin Y."/>
            <person name="Johnson S."/>
            <person name="Lee J."/>
            <person name="Lewis L."/>
            <person name="Liao D."/>
            <person name="Mark M.R."/>
            <person name="Robbie E."/>
            <person name="Sanchez C."/>
            <person name="Schoenfeld J."/>
            <person name="Seshagiri S."/>
            <person name="Simmons L."/>
            <person name="Singh J."/>
            <person name="Smith V."/>
            <person name="Stinson J."/>
            <person name="Vagts A."/>
            <person name="Vandlen R.L."/>
            <person name="Watanabe C."/>
            <person name="Wieand D."/>
            <person name="Woods K."/>
            <person name="Xie M.-H."/>
            <person name="Yansura D.G."/>
            <person name="Yi S."/>
            <person name="Yu G."/>
            <person name="Yuan J."/>
            <person name="Zhang M."/>
            <person name="Zhang Z."/>
            <person name="Goddard A.D."/>
            <person name="Wood W.I."/>
            <person name="Godowski P.J."/>
            <person name="Gray A.M."/>
        </authorList>
    </citation>
    <scope>NUCLEOTIDE SEQUENCE [LARGE SCALE MRNA] (ISOFORM 1)</scope>
</reference>
<reference key="3">
    <citation type="journal article" date="2006" name="Nature">
        <title>Human chromosome 11 DNA sequence and analysis including novel gene identification.</title>
        <authorList>
            <person name="Taylor T.D."/>
            <person name="Noguchi H."/>
            <person name="Totoki Y."/>
            <person name="Toyoda A."/>
            <person name="Kuroki Y."/>
            <person name="Dewar K."/>
            <person name="Lloyd C."/>
            <person name="Itoh T."/>
            <person name="Takeda T."/>
            <person name="Kim D.-W."/>
            <person name="She X."/>
            <person name="Barlow K.F."/>
            <person name="Bloom T."/>
            <person name="Bruford E."/>
            <person name="Chang J.L."/>
            <person name="Cuomo C.A."/>
            <person name="Eichler E."/>
            <person name="FitzGerald M.G."/>
            <person name="Jaffe D.B."/>
            <person name="LaButti K."/>
            <person name="Nicol R."/>
            <person name="Park H.-S."/>
            <person name="Seaman C."/>
            <person name="Sougnez C."/>
            <person name="Yang X."/>
            <person name="Zimmer A.R."/>
            <person name="Zody M.C."/>
            <person name="Birren B.W."/>
            <person name="Nusbaum C."/>
            <person name="Fujiyama A."/>
            <person name="Hattori M."/>
            <person name="Rogers J."/>
            <person name="Lander E.S."/>
            <person name="Sakaki Y."/>
        </authorList>
    </citation>
    <scope>NUCLEOTIDE SEQUENCE [LARGE SCALE GENOMIC DNA]</scope>
    <scope>VARIANT 125-ARG--ASN-341 DEL</scope>
</reference>
<reference key="4">
    <citation type="journal article" date="2004" name="Nature">
        <title>Differential modulation of endotoxin responsiveness by human caspase-12 polymorphisms.</title>
        <authorList>
            <person name="Saleh M."/>
            <person name="Vaillancourt J.P."/>
            <person name="Graham R.K."/>
            <person name="Huyck M."/>
            <person name="Srinivasula S.M."/>
            <person name="Alnemri E.S."/>
            <person name="Steinberg M.H."/>
            <person name="Nolan V."/>
            <person name="Baldwin C.T."/>
            <person name="Hotchkiss R.S."/>
            <person name="Buchman T.G."/>
            <person name="Zehnbauer B.A."/>
            <person name="Hayden M.R."/>
            <person name="Farrer L.A."/>
            <person name="Roy S."/>
            <person name="Nicholson D.W."/>
        </authorList>
    </citation>
    <scope>FUNCTION</scope>
    <scope>POLYMORPHISM</scope>
    <scope>VARIANT 125-ARG--ASN-341 DEL</scope>
</reference>
<reference key="5">
    <citation type="journal article" date="2006" name="Hum. Mutat.">
        <title>Population distribution of the functional caspase-12 allele.</title>
        <authorList>
            <person name="Kachapati K."/>
            <person name="O'Brien T.R."/>
            <person name="Bergeron J."/>
            <person name="Zhang M."/>
            <person name="Dean M."/>
        </authorList>
    </citation>
    <scope>POLYMORPHISM</scope>
    <scope>VARIANT 125-ARG--ASN-341 DEL</scope>
</reference>
<reference key="6">
    <citation type="journal article" date="2006" name="Am. J. Hum. Genet.">
        <title>Spread of an inactive form of caspase-12 in humans is due to recent positive selection.</title>
        <authorList>
            <person name="Xue Y."/>
            <person name="Daly A."/>
            <person name="Yngvadottir B."/>
            <person name="Liu M."/>
            <person name="Coop G."/>
            <person name="Kim Y."/>
            <person name="Sabeti P."/>
            <person name="Chen Y."/>
            <person name="Stalker J."/>
            <person name="Huckle E."/>
            <person name="Burton J."/>
            <person name="Leonard S."/>
            <person name="Rogers J."/>
            <person name="Tyler-Smith C."/>
        </authorList>
    </citation>
    <scope>POLYMORPHISM</scope>
    <scope>VARIANT 125-ARG--ASN-341 DEL</scope>
</reference>
<keyword id="KW-0025">Alternative splicing</keyword>
<keyword id="KW-0597">Phosphoprotein</keyword>
<keyword id="KW-1185">Reference proteome</keyword>
<protein>
    <recommendedName>
        <fullName>Inactive caspase-12</fullName>
        <shortName>CASP-12</shortName>
    </recommendedName>
</protein>
<sequence>MADEKPSNGVLVHMVKLLIKTFLDGIFDDLMENNVLNTDEIHLIGKCLKFVVSNAENLVDDITETAQIAGKIFREHLWNSKKQLSSDISSDGEREANMPGLNIRNKEFNYLHNRNGSELDLLGMRDLLENLGYSVVIKENLTAQEMETALRQFAAHPEHQSSDSTFLVFMSHSILNGICGTKHWDQEPDVLHDDTIFEIFNNRNCQSLKDKPKVIIMQACRGNGAGIVWFTTDSGKASADTHGRLLQGNICNDAVTKAHVEKDFIAFKSSTPHNVSWRHETNGSVFISQIIYYFREYSWSHHLEEIFQKVQHSFETPNILTQLPTIERLSMTRYFYLFPGN</sequence>